<dbReference type="EMBL" id="X15633">
    <property type="protein sequence ID" value="CAA33641.1"/>
    <property type="molecule type" value="Genomic_DNA"/>
</dbReference>
<dbReference type="EMBL" id="FO081169">
    <property type="protein sequence ID" value="CCD69634.1"/>
    <property type="molecule type" value="Genomic_DNA"/>
</dbReference>
<dbReference type="EMBL" id="FO081135">
    <property type="protein sequence ID" value="CCD69397.1"/>
    <property type="molecule type" value="Genomic_DNA"/>
</dbReference>
<dbReference type="EMBL" id="FO081551">
    <property type="protein sequence ID" value="CCD72371.1"/>
    <property type="molecule type" value="Genomic_DNA"/>
</dbReference>
<dbReference type="EMBL" id="FO081551">
    <property type="protein sequence ID" value="CCD72361.1"/>
    <property type="molecule type" value="Genomic_DNA"/>
</dbReference>
<dbReference type="EMBL" id="FO081223">
    <property type="protein sequence ID" value="CCD70021.1"/>
    <property type="molecule type" value="Genomic_DNA"/>
</dbReference>
<dbReference type="EMBL" id="Z73102">
    <property type="protein sequence ID" value="CAA97414.1"/>
    <property type="molecule type" value="Genomic_DNA"/>
</dbReference>
<dbReference type="EMBL" id="Z81128">
    <property type="protein sequence ID" value="CAB03399.1"/>
    <property type="molecule type" value="Genomic_DNA"/>
</dbReference>
<dbReference type="EMBL" id="Z81495">
    <property type="protein sequence ID" value="CAB04056.1"/>
    <property type="molecule type" value="Genomic_DNA"/>
</dbReference>
<dbReference type="EMBL" id="Z82271">
    <property type="protein sequence ID" value="CAB05212.1"/>
    <property type="molecule type" value="Genomic_DNA"/>
</dbReference>
<dbReference type="EMBL" id="Z83245">
    <property type="protein sequence ID" value="CAB05836.1"/>
    <property type="molecule type" value="Genomic_DNA"/>
</dbReference>
<dbReference type="EMBL" id="Z83245">
    <property type="protein sequence ID" value="CAB05838.1"/>
    <property type="molecule type" value="Genomic_DNA"/>
</dbReference>
<dbReference type="EMBL" id="Z92789">
    <property type="protein sequence ID" value="CAB07221.1"/>
    <property type="molecule type" value="Genomic_DNA"/>
</dbReference>
<dbReference type="EMBL" id="Z93388">
    <property type="protein sequence ID" value="CAB07656.1"/>
    <property type="molecule type" value="Genomic_DNA"/>
</dbReference>
<dbReference type="EMBL" id="FO081059">
    <property type="protein sequence ID" value="CCD68872.1"/>
    <property type="molecule type" value="Genomic_DNA"/>
</dbReference>
<dbReference type="EMBL" id="FO081059">
    <property type="protein sequence ID" value="CCD68866.1"/>
    <property type="molecule type" value="Genomic_DNA"/>
</dbReference>
<dbReference type="EMBL" id="FO081018">
    <property type="protein sequence ID" value="CCD68534.1"/>
    <property type="molecule type" value="Genomic_DNA"/>
</dbReference>
<dbReference type="PIR" id="S04238">
    <property type="entry name" value="HSKW2A"/>
</dbReference>
<dbReference type="RefSeq" id="NP_492642.1">
    <property type="nucleotide sequence ID" value="NM_060241.4"/>
</dbReference>
<dbReference type="RefSeq" id="NP_496887.1">
    <property type="nucleotide sequence ID" value="NM_064486.3"/>
</dbReference>
<dbReference type="RefSeq" id="NP_496891.1">
    <property type="nucleotide sequence ID" value="NM_064490.1"/>
</dbReference>
<dbReference type="RefSeq" id="NP_496898.1">
    <property type="nucleotide sequence ID" value="NM_064497.1"/>
</dbReference>
<dbReference type="RefSeq" id="NP_501201.1">
    <property type="nucleotide sequence ID" value="NM_068800.3"/>
</dbReference>
<dbReference type="RefSeq" id="NP_501404.1">
    <property type="nucleotide sequence ID" value="NM_069003.1"/>
</dbReference>
<dbReference type="RefSeq" id="NP_501408.1">
    <property type="nucleotide sequence ID" value="NM_069007.1"/>
</dbReference>
<dbReference type="RefSeq" id="NP_502131.1">
    <property type="nucleotide sequence ID" value="NM_069730.4"/>
</dbReference>
<dbReference type="RefSeq" id="NP_502141.1">
    <property type="nucleotide sequence ID" value="NM_069740.1"/>
</dbReference>
<dbReference type="RefSeq" id="NP_502150.1">
    <property type="nucleotide sequence ID" value="NM_069749.1"/>
</dbReference>
<dbReference type="RefSeq" id="NP_505198.1">
    <property type="nucleotide sequence ID" value="NM_072797.1"/>
</dbReference>
<dbReference type="RefSeq" id="NP_505277.1">
    <property type="nucleotide sequence ID" value="NM_072876.1"/>
</dbReference>
<dbReference type="RefSeq" id="NP_505280.1">
    <property type="nucleotide sequence ID" value="NM_072879.1"/>
</dbReference>
<dbReference type="RefSeq" id="NP_505293.1">
    <property type="nucleotide sequence ID" value="NM_072892.1"/>
</dbReference>
<dbReference type="RefSeq" id="NP_505296.1">
    <property type="nucleotide sequence ID" value="NM_072895.1"/>
</dbReference>
<dbReference type="RefSeq" id="NP_507032.1">
    <property type="nucleotide sequence ID" value="NM_074631.5"/>
</dbReference>
<dbReference type="PDB" id="6K00">
    <property type="method" value="X-ray"/>
    <property type="resolution" value="2.20 A"/>
    <property type="chains" value="D=10-121"/>
</dbReference>
<dbReference type="PDB" id="6K03">
    <property type="method" value="X-ray"/>
    <property type="resolution" value="2.86 A"/>
    <property type="chains" value="D=10-121"/>
</dbReference>
<dbReference type="PDB" id="6K09">
    <property type="method" value="X-ray"/>
    <property type="resolution" value="2.25 A"/>
    <property type="chains" value="D=10-121"/>
</dbReference>
<dbReference type="PDBsum" id="6K00"/>
<dbReference type="PDBsum" id="6K03"/>
<dbReference type="PDBsum" id="6K09"/>
<dbReference type="SMR" id="P09588"/>
<dbReference type="BioGRID" id="38282">
    <property type="interactions" value="2"/>
</dbReference>
<dbReference type="BioGRID" id="40311">
    <property type="interactions" value="1"/>
</dbReference>
<dbReference type="BioGRID" id="40314">
    <property type="interactions" value="2"/>
</dbReference>
<dbReference type="BioGRID" id="40320">
    <property type="interactions" value="1"/>
</dbReference>
<dbReference type="BioGRID" id="42639">
    <property type="interactions" value="2"/>
</dbReference>
<dbReference type="BioGRID" id="43147">
    <property type="interactions" value="2"/>
</dbReference>
<dbReference type="BioGRID" id="43154">
    <property type="interactions" value="1"/>
</dbReference>
<dbReference type="BioGRID" id="44299">
    <property type="interactions" value="1"/>
</dbReference>
<dbReference type="BioGRID" id="44303">
    <property type="interactions" value="1"/>
</dbReference>
<dbReference type="BioGRID" id="45064">
    <property type="interactions" value="6"/>
</dbReference>
<dbReference type="BioGRID" id="48911">
    <property type="interactions" value="1"/>
</dbReference>
<dbReference type="BioGRID" id="51394">
    <property type="interactions" value="2"/>
</dbReference>
<dbReference type="BioGRID" id="56170">
    <property type="interactions" value="2"/>
</dbReference>
<dbReference type="BioGRID" id="56176">
    <property type="interactions" value="1"/>
</dbReference>
<dbReference type="BioGRID" id="56178">
    <property type="interactions" value="2"/>
</dbReference>
<dbReference type="BioGRID" id="56827">
    <property type="interactions" value="1"/>
</dbReference>
<dbReference type="FunCoup" id="P09588">
    <property type="interactions" value="1153"/>
</dbReference>
<dbReference type="STRING" id="6239.B0035.7.1"/>
<dbReference type="iPTMnet" id="P09588"/>
<dbReference type="PaxDb" id="6239-B0035.7"/>
<dbReference type="EnsemblMetazoa" id="B0035.7.1">
    <property type="protein sequence ID" value="B0035.7.1"/>
    <property type="gene ID" value="WBGene00001921"/>
</dbReference>
<dbReference type="EnsemblMetazoa" id="F07B7.10.1">
    <property type="protein sequence ID" value="F07B7.10.1"/>
    <property type="gene ID" value="WBGene00001925"/>
</dbReference>
<dbReference type="EnsemblMetazoa" id="F07B7.3.1">
    <property type="protein sequence ID" value="F07B7.3.1"/>
    <property type="gene ID" value="WBGene00001927"/>
</dbReference>
<dbReference type="EnsemblMetazoa" id="F08G2.2.1">
    <property type="protein sequence ID" value="F08G2.2.1"/>
    <property type="gene ID" value="WBGene00001917"/>
</dbReference>
<dbReference type="EnsemblMetazoa" id="F17E9.13.1">
    <property type="protein sequence ID" value="F17E9.13.1"/>
    <property type="gene ID" value="WBGene00001907"/>
</dbReference>
<dbReference type="EnsemblMetazoa" id="F35H10.1.1">
    <property type="protein sequence ID" value="F35H10.1.1"/>
    <property type="gene ID" value="WBGene00001904"/>
</dbReference>
<dbReference type="EnsemblMetazoa" id="F45F2.4.1">
    <property type="protein sequence ID" value="F45F2.4.1"/>
    <property type="gene ID" value="WBGene00001881"/>
</dbReference>
<dbReference type="EnsemblMetazoa" id="F54E12.5a.1">
    <property type="protein sequence ID" value="F54E12.5a.1"/>
    <property type="gene ID" value="WBGene00001931"/>
</dbReference>
<dbReference type="EnsemblMetazoa" id="F55G1.10.1">
    <property type="protein sequence ID" value="F55G1.10.1"/>
    <property type="gene ID" value="WBGene00001935"/>
</dbReference>
<dbReference type="EnsemblMetazoa" id="H02I12.7.1">
    <property type="protein sequence ID" value="H02I12.7.1"/>
    <property type="gene ID" value="WBGene00001939"/>
</dbReference>
<dbReference type="EnsemblMetazoa" id="K06C4.11.1">
    <property type="protein sequence ID" value="K06C4.11.1"/>
    <property type="gene ID" value="WBGene00001893"/>
</dbReference>
<dbReference type="EnsemblMetazoa" id="K06C4.3.1">
    <property type="protein sequence ID" value="K06C4.3.1"/>
    <property type="gene ID" value="WBGene00001895"/>
</dbReference>
<dbReference type="EnsemblMetazoa" id="T10C6.12.1">
    <property type="protein sequence ID" value="T10C6.12.1"/>
    <property type="gene ID" value="WBGene00001877"/>
</dbReference>
<dbReference type="EnsemblMetazoa" id="T23D8.6.1">
    <property type="protein sequence ID" value="T23D8.6.1"/>
    <property type="gene ID" value="WBGene00001942"/>
</dbReference>
<dbReference type="EnsemblMetazoa" id="ZK131.10.1">
    <property type="protein sequence ID" value="ZK131.10.1"/>
    <property type="gene ID" value="WBGene00001890"/>
</dbReference>
<dbReference type="EnsemblMetazoa" id="ZK131.6.1">
    <property type="protein sequence ID" value="ZK131.6.1"/>
    <property type="gene ID" value="WBGene00001886"/>
</dbReference>
<dbReference type="GeneID" id="172860"/>
<dbReference type="GeneID" id="175025"/>
<dbReference type="GeneID" id="175028"/>
<dbReference type="GeneID" id="175034"/>
<dbReference type="GeneID" id="177521"/>
<dbReference type="GeneID" id="178048"/>
<dbReference type="GeneID" id="178056"/>
<dbReference type="GeneID" id="179261"/>
<dbReference type="GeneID" id="179265"/>
<dbReference type="GeneID" id="180073"/>
<dbReference type="GeneID" id="184112"/>
<dbReference type="GeneID" id="186671"/>
<dbReference type="GeneID" id="191669"/>
<dbReference type="GeneID" id="191676"/>
<dbReference type="GeneID" id="191678"/>
<dbReference type="GeneID" id="259800"/>
<dbReference type="KEGG" id="cel:CELE_B0035.7"/>
<dbReference type="KEGG" id="cel:CELE_F07B7.10"/>
<dbReference type="KEGG" id="cel:CELE_F07B7.3"/>
<dbReference type="KEGG" id="cel:CELE_F08G2.2"/>
<dbReference type="KEGG" id="cel:CELE_F17E9.13"/>
<dbReference type="KEGG" id="cel:CELE_F35H10.1"/>
<dbReference type="KEGG" id="cel:CELE_F45F2.4"/>
<dbReference type="KEGG" id="cel:CELE_F54E12.5"/>
<dbReference type="KEGG" id="cel:CELE_F55G1.10"/>
<dbReference type="KEGG" id="cel:CELE_H02I12.7"/>
<dbReference type="KEGG" id="cel:CELE_K06C4.11"/>
<dbReference type="KEGG" id="cel:CELE_K06C4.3"/>
<dbReference type="KEGG" id="cel:CELE_T10C6.12"/>
<dbReference type="KEGG" id="cel:CELE_T23D8.6"/>
<dbReference type="KEGG" id="cel:CELE_ZK131.10"/>
<dbReference type="KEGG" id="cel:CELE_ZK131.6"/>
<dbReference type="UCSC" id="T23D8.6">
    <property type="organism name" value="c. elegans"/>
</dbReference>
<dbReference type="AGR" id="WB:WBGene00001877"/>
<dbReference type="AGR" id="WB:WBGene00001881"/>
<dbReference type="AGR" id="WB:WBGene00001886"/>
<dbReference type="AGR" id="WB:WBGene00001890"/>
<dbReference type="AGR" id="WB:WBGene00001893"/>
<dbReference type="AGR" id="WB:WBGene00001895"/>
<dbReference type="AGR" id="WB:WBGene00001904"/>
<dbReference type="AGR" id="WB:WBGene00001907"/>
<dbReference type="AGR" id="WB:WBGene00001917"/>
<dbReference type="AGR" id="WB:WBGene00001921"/>
<dbReference type="AGR" id="WB:WBGene00001925"/>
<dbReference type="AGR" id="WB:WBGene00001927"/>
<dbReference type="AGR" id="WB:WBGene00001931"/>
<dbReference type="AGR" id="WB:WBGene00001935"/>
<dbReference type="AGR" id="WB:WBGene00001939"/>
<dbReference type="AGR" id="WB:WBGene00001942"/>
<dbReference type="CTD" id="172860"/>
<dbReference type="CTD" id="175025"/>
<dbReference type="CTD" id="175028"/>
<dbReference type="CTD" id="175034"/>
<dbReference type="CTD" id="177521"/>
<dbReference type="CTD" id="178048"/>
<dbReference type="CTD" id="178056"/>
<dbReference type="CTD" id="179261"/>
<dbReference type="CTD" id="179265"/>
<dbReference type="CTD" id="180073"/>
<dbReference type="CTD" id="184112"/>
<dbReference type="CTD" id="186671"/>
<dbReference type="CTD" id="191669"/>
<dbReference type="CTD" id="191676"/>
<dbReference type="CTD" id="191678"/>
<dbReference type="CTD" id="259800"/>
<dbReference type="WormBase" id="B0035.7">
    <property type="protein sequence ID" value="CE04501"/>
    <property type="gene ID" value="WBGene00001921"/>
    <property type="gene designation" value="his-47"/>
</dbReference>
<dbReference type="WormBase" id="F07B7.10">
    <property type="protein sequence ID" value="CE04501"/>
    <property type="gene ID" value="WBGene00001925"/>
    <property type="gene designation" value="his-51"/>
</dbReference>
<dbReference type="WormBase" id="F07B7.3">
    <property type="protein sequence ID" value="CE04501"/>
    <property type="gene ID" value="WBGene00001927"/>
    <property type="gene designation" value="his-53"/>
</dbReference>
<dbReference type="WormBase" id="F08G2.2">
    <property type="protein sequence ID" value="CE04501"/>
    <property type="gene ID" value="WBGene00001917"/>
    <property type="gene designation" value="his-43"/>
</dbReference>
<dbReference type="WormBase" id="F17E9.13">
    <property type="protein sequence ID" value="CE04501"/>
    <property type="gene ID" value="WBGene00001907"/>
    <property type="gene designation" value="his-33"/>
</dbReference>
<dbReference type="WormBase" id="F35H10.1">
    <property type="protein sequence ID" value="CE04501"/>
    <property type="gene ID" value="WBGene00001904"/>
    <property type="gene designation" value="his-30"/>
</dbReference>
<dbReference type="WormBase" id="F45F2.4">
    <property type="protein sequence ID" value="CE04501"/>
    <property type="gene ID" value="WBGene00001881"/>
    <property type="gene designation" value="his-7"/>
</dbReference>
<dbReference type="WormBase" id="F54E12.5">
    <property type="protein sequence ID" value="CE04501"/>
    <property type="gene ID" value="WBGene00001931"/>
    <property type="gene designation" value="his-57"/>
</dbReference>
<dbReference type="WormBase" id="F55G1.10">
    <property type="protein sequence ID" value="CE04501"/>
    <property type="gene ID" value="WBGene00001935"/>
    <property type="gene designation" value="his-61"/>
</dbReference>
<dbReference type="WormBase" id="H02I12.7">
    <property type="protein sequence ID" value="CE04501"/>
    <property type="gene ID" value="WBGene00001939"/>
    <property type="gene designation" value="his-65"/>
</dbReference>
<dbReference type="WormBase" id="K06C4.11">
    <property type="protein sequence ID" value="CE04501"/>
    <property type="gene ID" value="WBGene00001893"/>
    <property type="gene designation" value="his-19"/>
</dbReference>
<dbReference type="WormBase" id="K06C4.3">
    <property type="protein sequence ID" value="CE04501"/>
    <property type="gene ID" value="WBGene00001895"/>
    <property type="gene designation" value="his-21"/>
</dbReference>
<dbReference type="WormBase" id="T10C6.12">
    <property type="protein sequence ID" value="CE04501"/>
    <property type="gene ID" value="WBGene00001877"/>
    <property type="gene designation" value="his-3"/>
</dbReference>
<dbReference type="WormBase" id="T23D8.6">
    <property type="protein sequence ID" value="CE04501"/>
    <property type="gene ID" value="WBGene00001942"/>
    <property type="gene designation" value="his-68"/>
</dbReference>
<dbReference type="WormBase" id="ZK131.10">
    <property type="protein sequence ID" value="CE04501"/>
    <property type="gene ID" value="WBGene00001890"/>
    <property type="gene designation" value="his-16"/>
</dbReference>
<dbReference type="WormBase" id="ZK131.6">
    <property type="protein sequence ID" value="CE04501"/>
    <property type="gene ID" value="WBGene00001886"/>
    <property type="gene designation" value="his-12"/>
</dbReference>
<dbReference type="eggNOG" id="KOG1756">
    <property type="taxonomic scope" value="Eukaryota"/>
</dbReference>
<dbReference type="GeneTree" id="ENSGT01020000230360"/>
<dbReference type="HOGENOM" id="CLU_062828_3_1_1"/>
<dbReference type="InParanoid" id="P09588"/>
<dbReference type="OMA" id="AAEVQFE"/>
<dbReference type="OrthoDB" id="5918422at2759"/>
<dbReference type="PhylomeDB" id="P09588"/>
<dbReference type="Reactome" id="R-CEL-2299718">
    <property type="pathway name" value="Condensation of Prophase Chromosomes"/>
</dbReference>
<dbReference type="Reactome" id="R-CEL-2559580">
    <property type="pathway name" value="Oxidative Stress Induced Senescence"/>
</dbReference>
<dbReference type="Reactome" id="R-CEL-3214858">
    <property type="pathway name" value="RMTs methylate histone arginines"/>
</dbReference>
<dbReference type="Reactome" id="R-CEL-5250924">
    <property type="pathway name" value="B-WICH complex positively regulates rRNA expression"/>
</dbReference>
<dbReference type="Reactome" id="R-CEL-5578749">
    <property type="pathway name" value="Transcriptional regulation by small RNAs"/>
</dbReference>
<dbReference type="Reactome" id="R-CEL-5689880">
    <property type="pathway name" value="Ub-specific processing proteases"/>
</dbReference>
<dbReference type="Reactome" id="R-CEL-5689901">
    <property type="pathway name" value="Metalloprotease DUBs"/>
</dbReference>
<dbReference type="Reactome" id="R-CEL-68616">
    <property type="pathway name" value="Assembly of the ORC complex at the origin of replication"/>
</dbReference>
<dbReference type="Reactome" id="R-CEL-73772">
    <property type="pathway name" value="RNA Polymerase I Promoter Escape"/>
</dbReference>
<dbReference type="Reactome" id="R-CEL-8936459">
    <property type="pathway name" value="RUNX1 regulates genes involved in megakaryocyte differentiation and platelet function"/>
</dbReference>
<dbReference type="Reactome" id="R-CEL-9843940">
    <property type="pathway name" value="Regulation of endogenous retroelements by KRAB-ZFP proteins"/>
</dbReference>
<dbReference type="PRO" id="PR:P09588"/>
<dbReference type="Proteomes" id="UP000001940">
    <property type="component" value="Chromosome I"/>
</dbReference>
<dbReference type="Proteomes" id="UP000001940">
    <property type="component" value="Chromosome II"/>
</dbReference>
<dbReference type="Proteomes" id="UP000001940">
    <property type="component" value="Chromosome IV"/>
</dbReference>
<dbReference type="Proteomes" id="UP000001940">
    <property type="component" value="Chromosome V"/>
</dbReference>
<dbReference type="Bgee" id="WBGene00001877">
    <property type="expression patterns" value="Expressed in pharyngeal muscle cell (C elegans) and 3 other cell types or tissues"/>
</dbReference>
<dbReference type="GO" id="GO:0000786">
    <property type="term" value="C:nucleosome"/>
    <property type="evidence" value="ECO:0000318"/>
    <property type="project" value="GO_Central"/>
</dbReference>
<dbReference type="GO" id="GO:0005634">
    <property type="term" value="C:nucleus"/>
    <property type="evidence" value="ECO:0000318"/>
    <property type="project" value="GO_Central"/>
</dbReference>
<dbReference type="GO" id="GO:0003677">
    <property type="term" value="F:DNA binding"/>
    <property type="evidence" value="ECO:0007669"/>
    <property type="project" value="UniProtKB-KW"/>
</dbReference>
<dbReference type="GO" id="GO:0046982">
    <property type="term" value="F:protein heterodimerization activity"/>
    <property type="evidence" value="ECO:0007669"/>
    <property type="project" value="InterPro"/>
</dbReference>
<dbReference type="GO" id="GO:0030527">
    <property type="term" value="F:structural constituent of chromatin"/>
    <property type="evidence" value="ECO:0000318"/>
    <property type="project" value="GO_Central"/>
</dbReference>
<dbReference type="GO" id="GO:0050829">
    <property type="term" value="P:defense response to Gram-negative bacterium"/>
    <property type="evidence" value="ECO:0000315"/>
    <property type="project" value="WormBase"/>
</dbReference>
<dbReference type="GO" id="GO:0006281">
    <property type="term" value="P:DNA repair"/>
    <property type="evidence" value="ECO:0000303"/>
    <property type="project" value="UniProtKB"/>
</dbReference>
<dbReference type="GO" id="GO:0031507">
    <property type="term" value="P:heterochromatin formation"/>
    <property type="evidence" value="ECO:0000318"/>
    <property type="project" value="GO_Central"/>
</dbReference>
<dbReference type="GO" id="GO:0045087">
    <property type="term" value="P:innate immune response"/>
    <property type="evidence" value="ECO:0000315"/>
    <property type="project" value="WormBase"/>
</dbReference>
<dbReference type="GO" id="GO:0006355">
    <property type="term" value="P:regulation of DNA-templated transcription"/>
    <property type="evidence" value="ECO:0000303"/>
    <property type="project" value="UniProtKB"/>
</dbReference>
<dbReference type="CDD" id="cd00074">
    <property type="entry name" value="HFD_H2A"/>
    <property type="match status" value="1"/>
</dbReference>
<dbReference type="FunFam" id="1.10.20.10:FF:000020">
    <property type="entry name" value="Histone H2A"/>
    <property type="match status" value="1"/>
</dbReference>
<dbReference type="Gene3D" id="1.10.20.10">
    <property type="entry name" value="Histone, subunit A"/>
    <property type="match status" value="1"/>
</dbReference>
<dbReference type="InterPro" id="IPR009072">
    <property type="entry name" value="Histone-fold"/>
</dbReference>
<dbReference type="InterPro" id="IPR002119">
    <property type="entry name" value="Histone_H2A"/>
</dbReference>
<dbReference type="InterPro" id="IPR007125">
    <property type="entry name" value="Histone_H2A/H2B/H3"/>
</dbReference>
<dbReference type="InterPro" id="IPR032454">
    <property type="entry name" value="Histone_H2A_C"/>
</dbReference>
<dbReference type="InterPro" id="IPR032458">
    <property type="entry name" value="Histone_H2A_CS"/>
</dbReference>
<dbReference type="PANTHER" id="PTHR23430">
    <property type="entry name" value="HISTONE H2A"/>
    <property type="match status" value="1"/>
</dbReference>
<dbReference type="Pfam" id="PF00125">
    <property type="entry name" value="Histone"/>
    <property type="match status" value="1"/>
</dbReference>
<dbReference type="Pfam" id="PF16211">
    <property type="entry name" value="Histone_H2A_C"/>
    <property type="match status" value="1"/>
</dbReference>
<dbReference type="PRINTS" id="PR00620">
    <property type="entry name" value="HISTONEH2A"/>
</dbReference>
<dbReference type="SMART" id="SM00414">
    <property type="entry name" value="H2A"/>
    <property type="match status" value="1"/>
</dbReference>
<dbReference type="SUPFAM" id="SSF47113">
    <property type="entry name" value="Histone-fold"/>
    <property type="match status" value="1"/>
</dbReference>
<dbReference type="PROSITE" id="PS00046">
    <property type="entry name" value="HISTONE_H2A"/>
    <property type="match status" value="1"/>
</dbReference>
<evidence type="ECO:0000250" key="1"/>
<evidence type="ECO:0000256" key="2">
    <source>
        <dbReference type="SAM" id="MobiDB-lite"/>
    </source>
</evidence>
<evidence type="ECO:0000269" key="3">
    <source>
    </source>
</evidence>
<evidence type="ECO:0000305" key="4"/>
<evidence type="ECO:0000305" key="5">
    <source>
    </source>
</evidence>
<evidence type="ECO:0000305" key="6">
    <source>
    </source>
</evidence>
<evidence type="ECO:0000305" key="7">
    <source>
    </source>
</evidence>
<evidence type="ECO:0007829" key="8">
    <source>
        <dbReference type="PDB" id="6K00"/>
    </source>
</evidence>
<evidence type="ECO:0007829" key="9">
    <source>
        <dbReference type="PDB" id="6K03"/>
    </source>
</evidence>
<name>H2A_CAEEL</name>
<proteinExistence type="evidence at protein level"/>
<feature type="initiator methionine" description="Removed" evidence="3">
    <location>
        <position position="1"/>
    </location>
</feature>
<feature type="chain" id="PRO_0000055210" description="Histone H2A">
    <location>
        <begin position="2"/>
        <end position="127"/>
    </location>
</feature>
<feature type="region of interest" description="Disordered" evidence="2">
    <location>
        <begin position="1"/>
        <end position="23"/>
    </location>
</feature>
<feature type="compositionally biased region" description="Basic residues" evidence="2">
    <location>
        <begin position="1"/>
        <end position="20"/>
    </location>
</feature>
<feature type="modified residue" description="N-acetylserine" evidence="7">
    <location>
        <position position="2"/>
    </location>
</feature>
<feature type="modified residue" description="Phosphoserine" evidence="5">
    <location>
        <position position="2"/>
    </location>
</feature>
<feature type="modified residue" description="N6-acetyllysine; partial" evidence="3">
    <location>
        <position position="6"/>
    </location>
</feature>
<feature type="modified residue" description="N6-acetyllysine; partial" evidence="3">
    <location>
        <position position="9"/>
    </location>
</feature>
<feature type="modified residue" description="N6-acetyllysine; partial" evidence="3">
    <location>
        <position position="11"/>
    </location>
</feature>
<feature type="modified residue" description="N5-methylglutamine" evidence="1">
    <location>
        <position position="106"/>
    </location>
</feature>
<feature type="cross-link" description="Glycyl lysine isopeptide (Lys-Gly) (interchain with G-Cter in ubiquitin)" evidence="6">
    <location>
        <position position="121"/>
    </location>
</feature>
<feature type="helix" evidence="8">
    <location>
        <begin position="19"/>
        <end position="22"/>
    </location>
</feature>
<feature type="helix" evidence="8">
    <location>
        <begin position="29"/>
        <end position="38"/>
    </location>
</feature>
<feature type="turn" evidence="8">
    <location>
        <begin position="39"/>
        <end position="42"/>
    </location>
</feature>
<feature type="strand" evidence="9">
    <location>
        <begin position="43"/>
        <end position="45"/>
    </location>
</feature>
<feature type="helix" evidence="8">
    <location>
        <begin position="48"/>
        <end position="74"/>
    </location>
</feature>
<feature type="strand" evidence="8">
    <location>
        <begin position="78"/>
        <end position="80"/>
    </location>
</feature>
<feature type="helix" evidence="8">
    <location>
        <begin position="82"/>
        <end position="90"/>
    </location>
</feature>
<feature type="helix" evidence="8">
    <location>
        <begin position="93"/>
        <end position="98"/>
    </location>
</feature>
<gene>
    <name type="primary">his-3</name>
    <name type="ORF">T10C6.12</name>
</gene>
<gene>
    <name type="primary">his-7</name>
    <name type="ORF">F45F2.4</name>
</gene>
<gene>
    <name type="primary">his-12</name>
    <name type="ORF">ZK131.6</name>
</gene>
<gene>
    <name type="primary">his-16</name>
    <name type="ORF">ZK131.10</name>
</gene>
<gene>
    <name type="primary">his-19</name>
    <name type="ORF">K06C4.11</name>
</gene>
<gene>
    <name type="primary">his-21</name>
    <name type="ORF">K06C4.3</name>
</gene>
<gene>
    <name type="primary">his-30</name>
    <name type="ORF">F35H10.1</name>
</gene>
<gene>
    <name type="primary">his-33</name>
    <name type="ORF">F17E9.13</name>
</gene>
<gene>
    <name type="primary">his-43</name>
    <name type="ORF">F08G2.2</name>
</gene>
<gene>
    <name type="primary">his-47</name>
    <name type="ORF">B0035.7</name>
</gene>
<gene>
    <name type="primary">his-51</name>
    <name type="ORF">F07B7.10</name>
</gene>
<gene>
    <name type="primary">his-53</name>
    <name type="ORF">F07B7.3</name>
</gene>
<gene>
    <name type="primary">his-57</name>
    <name type="ORF">F54E12.5</name>
</gene>
<gene>
    <name type="primary">his-61</name>
    <name type="ORF">F55G1.10</name>
</gene>
<gene>
    <name type="primary">his-65</name>
    <name type="ORF">H02I12.7</name>
</gene>
<gene>
    <name type="primary">his-68</name>
    <name type="ORF">T23D8.6</name>
</gene>
<keyword id="KW-0002">3D-structure</keyword>
<keyword id="KW-0007">Acetylation</keyword>
<keyword id="KW-0158">Chromosome</keyword>
<keyword id="KW-0903">Direct protein sequencing</keyword>
<keyword id="KW-0238">DNA-binding</keyword>
<keyword id="KW-1017">Isopeptide bond</keyword>
<keyword id="KW-0488">Methylation</keyword>
<keyword id="KW-0544">Nucleosome core</keyword>
<keyword id="KW-0539">Nucleus</keyword>
<keyword id="KW-0597">Phosphoprotein</keyword>
<keyword id="KW-1185">Reference proteome</keyword>
<keyword id="KW-0832">Ubl conjugation</keyword>
<sequence>MSGRGKGGKAKTGGKAKSRSSRAGLQFPVGRLHRILRKGNYAQRVGAGAPVYLAAVLEYLAAEVLELAGNAARDNKKTRIAPRHLQLAVRNDEELNKLLAGVTIAQGGVLPNIQAVLLPKKTGGDKE</sequence>
<reference key="1">
    <citation type="journal article" date="1989" name="J. Mol. Biol.">
        <title>Nucleotide sequences of Caenorhabditis elegans core histone genes. Genes for different histone classes share common flanking sequence elements.</title>
        <authorList>
            <person name="Roberts S.B."/>
            <person name="Emmons S.W."/>
            <person name="Childs G."/>
        </authorList>
    </citation>
    <scope>NUCLEOTIDE SEQUENCE [GENOMIC DNA]</scope>
</reference>
<reference key="2">
    <citation type="journal article" date="1998" name="Science">
        <title>Genome sequence of the nematode C. elegans: a platform for investigating biology.</title>
        <authorList>
            <consortium name="The C. elegans sequencing consortium"/>
        </authorList>
    </citation>
    <scope>NUCLEOTIDE SEQUENCE [LARGE SCALE GENOMIC DNA]</scope>
    <source>
        <strain>Bristol N2</strain>
    </source>
</reference>
<reference key="3">
    <citation type="journal article" date="1987" name="Biochem. J.">
        <title>The primary structure of histone H2A from the nematode Caenorhabditis elegans.</title>
        <authorList>
            <person name="Vanfleteren J.R."/>
            <person name="van Bun S.M."/>
            <person name="van Beeumen J.J."/>
        </authorList>
    </citation>
    <scope>PROTEIN SEQUENCE OF 2-127</scope>
    <scope>ACETYLATION AT SER-2; LYS-6; LYS-9 AND LYS-11</scope>
    <source>
        <strain>DR27</strain>
    </source>
</reference>
<reference key="4">
    <citation type="journal article" date="2004" name="Chromosoma">
        <title>The enhancement of histone H4 and H2A serine 1 phosphorylation during mitosis and S-phase is evolutionarily conserved.</title>
        <authorList>
            <person name="Barber C.M."/>
            <person name="Turner F.B."/>
            <person name="Wang Y."/>
            <person name="Hagstrom K."/>
            <person name="Taverna S.D."/>
            <person name="Mollah S."/>
            <person name="Ueberheide B."/>
            <person name="Meyer B.J."/>
            <person name="Hunt D.F."/>
            <person name="Cheung P."/>
            <person name="Allis C.D."/>
        </authorList>
    </citation>
    <scope>PHOSPHORYLATION AT SER-2</scope>
</reference>
<reference key="5">
    <citation type="journal article" date="2004" name="Dev. Cell">
        <title>Polycomb group proteins Ring1A/B link ubiquitylation of histone H2A to heritable gene silencing and X inactivation.</title>
        <authorList>
            <person name="de Napoles M."/>
            <person name="Mermoud J.E."/>
            <person name="Wakao R."/>
            <person name="Tang Y.A."/>
            <person name="Endoh M."/>
            <person name="Appanah R."/>
            <person name="Nesterova T.B."/>
            <person name="Silva J."/>
            <person name="Otte A.P."/>
            <person name="Vidal M."/>
            <person name="Koseki H."/>
            <person name="Brockdorff N."/>
        </authorList>
    </citation>
    <scope>UBIQUITINATION</scope>
</reference>
<comment type="function">
    <text>Core component of nucleosome. Nucleosomes wrap and compact DNA into chromatin, limiting DNA accessibility to the cellular machineries which require DNA as a template. Histones thereby play a central role in transcription regulation, DNA repair, DNA replication and chromosomal stability. DNA accessibility is regulated via a complex set of post-translational modifications of histones, also called histone code, and nucleosome remodeling.</text>
</comment>
<comment type="subunit">
    <text>The nucleosome is a histone octamer containing two molecules each of H2A, H2B, H3 and H4 assembled in one H3-H4 heterotetramer and two H2A-H2B heterodimers. The octamer wraps approximately 147 bp of DNA.</text>
</comment>
<comment type="subcellular location">
    <subcellularLocation>
        <location>Nucleus</location>
    </subcellularLocation>
    <subcellularLocation>
        <location>Chromosome</location>
    </subcellularLocation>
</comment>
<comment type="PTM">
    <text evidence="4">Monoubiquitination of Lys-121 gives a specific tag for epigenetic transcriptional repression.</text>
</comment>
<comment type="PTM">
    <text evidence="1">Phosphorylation on Ser-2 is enhanced during mitosis. Phosphorylation on Ser-2 directly represses transcription (By similarity).</text>
</comment>
<comment type="similarity">
    <text evidence="4">Belongs to the histone H2A family.</text>
</comment>
<protein>
    <recommendedName>
        <fullName>Histone H2A</fullName>
    </recommendedName>
</protein>
<accession>P09588</accession>
<accession>Q7JKF5</accession>
<organism>
    <name type="scientific">Caenorhabditis elegans</name>
    <dbReference type="NCBI Taxonomy" id="6239"/>
    <lineage>
        <taxon>Eukaryota</taxon>
        <taxon>Metazoa</taxon>
        <taxon>Ecdysozoa</taxon>
        <taxon>Nematoda</taxon>
        <taxon>Chromadorea</taxon>
        <taxon>Rhabditida</taxon>
        <taxon>Rhabditina</taxon>
        <taxon>Rhabditomorpha</taxon>
        <taxon>Rhabditoidea</taxon>
        <taxon>Rhabditidae</taxon>
        <taxon>Peloderinae</taxon>
        <taxon>Caenorhabditis</taxon>
    </lineage>
</organism>